<accession>Q8A2N9</accession>
<reference key="1">
    <citation type="journal article" date="2003" name="Science">
        <title>A genomic view of the human-Bacteroides thetaiotaomicron symbiosis.</title>
        <authorList>
            <person name="Xu J."/>
            <person name="Bjursell M.K."/>
            <person name="Himrod J."/>
            <person name="Deng S."/>
            <person name="Carmichael L.K."/>
            <person name="Chiang H.C."/>
            <person name="Hooper L.V."/>
            <person name="Gordon J.I."/>
        </authorList>
    </citation>
    <scope>NUCLEOTIDE SEQUENCE [LARGE SCALE GENOMIC DNA]</scope>
    <source>
        <strain>ATCC 29148 / DSM 2079 / JCM 5827 / CCUG 10774 / NCTC 10582 / VPI-5482 / E50</strain>
    </source>
</reference>
<dbReference type="EMBL" id="AE015928">
    <property type="protein sequence ID" value="AAO78372.1"/>
    <property type="molecule type" value="Genomic_DNA"/>
</dbReference>
<dbReference type="RefSeq" id="NP_812178.1">
    <property type="nucleotide sequence ID" value="NC_004663.1"/>
</dbReference>
<dbReference type="RefSeq" id="WP_011108727.1">
    <property type="nucleotide sequence ID" value="NC_004663.1"/>
</dbReference>
<dbReference type="SMR" id="Q8A2N9"/>
<dbReference type="FunCoup" id="Q8A2N9">
    <property type="interactions" value="215"/>
</dbReference>
<dbReference type="STRING" id="226186.BT_3266"/>
<dbReference type="PaxDb" id="226186-BT_3266"/>
<dbReference type="EnsemblBacteria" id="AAO78372">
    <property type="protein sequence ID" value="AAO78372"/>
    <property type="gene ID" value="BT_3266"/>
</dbReference>
<dbReference type="GeneID" id="60924446"/>
<dbReference type="KEGG" id="bth:BT_3266"/>
<dbReference type="PATRIC" id="fig|226186.12.peg.3331"/>
<dbReference type="eggNOG" id="COG0322">
    <property type="taxonomic scope" value="Bacteria"/>
</dbReference>
<dbReference type="HOGENOM" id="CLU_014841_3_2_10"/>
<dbReference type="InParanoid" id="Q8A2N9"/>
<dbReference type="OrthoDB" id="9804933at2"/>
<dbReference type="Proteomes" id="UP000001414">
    <property type="component" value="Chromosome"/>
</dbReference>
<dbReference type="GO" id="GO:0005737">
    <property type="term" value="C:cytoplasm"/>
    <property type="evidence" value="ECO:0007669"/>
    <property type="project" value="UniProtKB-SubCell"/>
</dbReference>
<dbReference type="GO" id="GO:0009380">
    <property type="term" value="C:excinuclease repair complex"/>
    <property type="evidence" value="ECO:0000318"/>
    <property type="project" value="GO_Central"/>
</dbReference>
<dbReference type="GO" id="GO:0003677">
    <property type="term" value="F:DNA binding"/>
    <property type="evidence" value="ECO:0007669"/>
    <property type="project" value="UniProtKB-UniRule"/>
</dbReference>
<dbReference type="GO" id="GO:0009381">
    <property type="term" value="F:excinuclease ABC activity"/>
    <property type="evidence" value="ECO:0007669"/>
    <property type="project" value="UniProtKB-UniRule"/>
</dbReference>
<dbReference type="GO" id="GO:0006974">
    <property type="term" value="P:DNA damage response"/>
    <property type="evidence" value="ECO:0000318"/>
    <property type="project" value="GO_Central"/>
</dbReference>
<dbReference type="GO" id="GO:0006289">
    <property type="term" value="P:nucleotide-excision repair"/>
    <property type="evidence" value="ECO:0007669"/>
    <property type="project" value="UniProtKB-UniRule"/>
</dbReference>
<dbReference type="GO" id="GO:0009432">
    <property type="term" value="P:SOS response"/>
    <property type="evidence" value="ECO:0007669"/>
    <property type="project" value="UniProtKB-UniRule"/>
</dbReference>
<dbReference type="CDD" id="cd10434">
    <property type="entry name" value="GIY-YIG_UvrC_Cho"/>
    <property type="match status" value="1"/>
</dbReference>
<dbReference type="FunFam" id="3.30.420.340:FF:000002">
    <property type="entry name" value="UvrABC system protein C"/>
    <property type="match status" value="1"/>
</dbReference>
<dbReference type="FunFam" id="3.40.1440.10:FF:000001">
    <property type="entry name" value="UvrABC system protein C"/>
    <property type="match status" value="1"/>
</dbReference>
<dbReference type="Gene3D" id="1.10.150.20">
    <property type="entry name" value="5' to 3' exonuclease, C-terminal subdomain"/>
    <property type="match status" value="1"/>
</dbReference>
<dbReference type="Gene3D" id="3.40.1440.10">
    <property type="entry name" value="GIY-YIG endonuclease"/>
    <property type="match status" value="1"/>
</dbReference>
<dbReference type="Gene3D" id="3.30.420.340">
    <property type="entry name" value="UvrC, RNAse H endonuclease domain"/>
    <property type="match status" value="1"/>
</dbReference>
<dbReference type="HAMAP" id="MF_00203">
    <property type="entry name" value="UvrC"/>
    <property type="match status" value="1"/>
</dbReference>
<dbReference type="InterPro" id="IPR000305">
    <property type="entry name" value="GIY-YIG_endonuc"/>
</dbReference>
<dbReference type="InterPro" id="IPR035901">
    <property type="entry name" value="GIY-YIG_endonuc_sf"/>
</dbReference>
<dbReference type="InterPro" id="IPR047296">
    <property type="entry name" value="GIY-YIG_UvrC_Cho"/>
</dbReference>
<dbReference type="InterPro" id="IPR010994">
    <property type="entry name" value="RuvA_2-like"/>
</dbReference>
<dbReference type="InterPro" id="IPR036876">
    <property type="entry name" value="UVR_dom_sf"/>
</dbReference>
<dbReference type="InterPro" id="IPR050066">
    <property type="entry name" value="UvrABC_protein_C"/>
</dbReference>
<dbReference type="InterPro" id="IPR004791">
    <property type="entry name" value="UvrC"/>
</dbReference>
<dbReference type="InterPro" id="IPR001162">
    <property type="entry name" value="UvrC_RNase_H_dom"/>
</dbReference>
<dbReference type="InterPro" id="IPR038476">
    <property type="entry name" value="UvrC_RNase_H_dom_sf"/>
</dbReference>
<dbReference type="NCBIfam" id="TIGR00194">
    <property type="entry name" value="uvrC"/>
    <property type="match status" value="1"/>
</dbReference>
<dbReference type="PANTHER" id="PTHR30562:SF1">
    <property type="entry name" value="UVRABC SYSTEM PROTEIN C"/>
    <property type="match status" value="1"/>
</dbReference>
<dbReference type="PANTHER" id="PTHR30562">
    <property type="entry name" value="UVRC/OXIDOREDUCTASE"/>
    <property type="match status" value="1"/>
</dbReference>
<dbReference type="Pfam" id="PF01541">
    <property type="entry name" value="GIY-YIG"/>
    <property type="match status" value="1"/>
</dbReference>
<dbReference type="Pfam" id="PF14520">
    <property type="entry name" value="HHH_5"/>
    <property type="match status" value="1"/>
</dbReference>
<dbReference type="Pfam" id="PF22920">
    <property type="entry name" value="UvrC_RNaseH"/>
    <property type="match status" value="1"/>
</dbReference>
<dbReference type="Pfam" id="PF08459">
    <property type="entry name" value="UvrC_RNaseH_dom"/>
    <property type="match status" value="1"/>
</dbReference>
<dbReference type="SMART" id="SM00465">
    <property type="entry name" value="GIYc"/>
    <property type="match status" value="1"/>
</dbReference>
<dbReference type="SUPFAM" id="SSF46600">
    <property type="entry name" value="C-terminal UvrC-binding domain of UvrB"/>
    <property type="match status" value="1"/>
</dbReference>
<dbReference type="SUPFAM" id="SSF82771">
    <property type="entry name" value="GIY-YIG endonuclease"/>
    <property type="match status" value="1"/>
</dbReference>
<dbReference type="SUPFAM" id="SSF47781">
    <property type="entry name" value="RuvA domain 2-like"/>
    <property type="match status" value="1"/>
</dbReference>
<dbReference type="PROSITE" id="PS50164">
    <property type="entry name" value="GIY_YIG"/>
    <property type="match status" value="1"/>
</dbReference>
<dbReference type="PROSITE" id="PS50165">
    <property type="entry name" value="UVRC"/>
    <property type="match status" value="1"/>
</dbReference>
<comment type="function">
    <text evidence="1">The UvrABC repair system catalyzes the recognition and processing of DNA lesions. UvrC both incises the 5' and 3' sides of the lesion. The N-terminal half is responsible for the 3' incision and the C-terminal half is responsible for the 5' incision.</text>
</comment>
<comment type="subunit">
    <text evidence="1">Interacts with UvrB in an incision complex.</text>
</comment>
<comment type="subcellular location">
    <subcellularLocation>
        <location evidence="1">Cytoplasm</location>
    </subcellularLocation>
</comment>
<comment type="similarity">
    <text evidence="1">Belongs to the UvrC family.</text>
</comment>
<name>UVRC_BACTN</name>
<evidence type="ECO:0000255" key="1">
    <source>
        <dbReference type="HAMAP-Rule" id="MF_00203"/>
    </source>
</evidence>
<proteinExistence type="inferred from homology"/>
<feature type="chain" id="PRO_0000227402" description="UvrABC system protein C">
    <location>
        <begin position="1"/>
        <end position="609"/>
    </location>
</feature>
<feature type="domain" description="GIY-YIG" evidence="1">
    <location>
        <begin position="22"/>
        <end position="100"/>
    </location>
</feature>
<feature type="domain" description="UVR" evidence="1">
    <location>
        <begin position="214"/>
        <end position="249"/>
    </location>
</feature>
<protein>
    <recommendedName>
        <fullName evidence="1">UvrABC system protein C</fullName>
        <shortName evidence="1">Protein UvrC</shortName>
    </recommendedName>
    <alternativeName>
        <fullName evidence="1">Excinuclease ABC subunit C</fullName>
    </alternativeName>
</protein>
<keyword id="KW-0963">Cytoplasm</keyword>
<keyword id="KW-0227">DNA damage</keyword>
<keyword id="KW-0228">DNA excision</keyword>
<keyword id="KW-0234">DNA repair</keyword>
<keyword id="KW-0267">Excision nuclease</keyword>
<keyword id="KW-1185">Reference proteome</keyword>
<keyword id="KW-0742">SOS response</keyword>
<gene>
    <name evidence="1" type="primary">uvrC</name>
    <name type="ordered locus">BT_3266</name>
</gene>
<organism>
    <name type="scientific">Bacteroides thetaiotaomicron (strain ATCC 29148 / DSM 2079 / JCM 5827 / CCUG 10774 / NCTC 10582 / VPI-5482 / E50)</name>
    <dbReference type="NCBI Taxonomy" id="226186"/>
    <lineage>
        <taxon>Bacteria</taxon>
        <taxon>Pseudomonadati</taxon>
        <taxon>Bacteroidota</taxon>
        <taxon>Bacteroidia</taxon>
        <taxon>Bacteroidales</taxon>
        <taxon>Bacteroidaceae</taxon>
        <taxon>Bacteroides</taxon>
    </lineage>
</organism>
<sequence length="609" mass="70186">MNTEPEAKTNEYLRGIVANLPEKPGVYQYLNTEGTIIYVGKAKNLKKRVYSYFSKEHEPGKTRVLVSKIADIRYIVVNTEEDALLLENNLIKKYKPRYNVLLKDDKTYPSICVQNEYFPRIFRTRKIIKNGSSYYGPYSHLPSMYAVLDLIKHLYPLRTCNLNLSPENIRAGKFKVCLEYHIKKCAGPCVGLQSHEDYLKNIDEIKEILKGNTQDISRMLVEKMQELANEMKFEEAQKIKEKYLLIENYRSKSEVVSSVLHNIDVFSIEEDDSNSAFVNYLHITNGAINQAFTFEYKKKLNESKEELLTLGIIEMRERYKSHSREIIVPFELDLELNNVVFTVPQRGDKKKLLDLSILNVKQYKADRLKQAEKLNPEQRSMRLLKEIQNELHLDKPPLQIECFDNSNIQGSDAVAACVVFKKAKPSKKDYRKYNIKTVVGPDDYASMKEVVRRRYQRAIEENSPLPDLIITDGGKGQMEVVREVIEDELHLNIPIAGLAKDNKHRTSELLFGFPAQTIGIKQQSSLFRLLTQIQDEVHRFAITFHRDKRSKRQVASALDSIKGIGEKTKTALLKEFKSVKRIKEASLEEIAKVIGEVKAQTVKKGLSNE</sequence>